<organism>
    <name type="scientific">Idiomarina loihiensis (strain ATCC BAA-735 / DSM 15497 / L2-TR)</name>
    <dbReference type="NCBI Taxonomy" id="283942"/>
    <lineage>
        <taxon>Bacteria</taxon>
        <taxon>Pseudomonadati</taxon>
        <taxon>Pseudomonadota</taxon>
        <taxon>Gammaproteobacteria</taxon>
        <taxon>Alteromonadales</taxon>
        <taxon>Idiomarinaceae</taxon>
        <taxon>Idiomarina</taxon>
    </lineage>
</organism>
<keyword id="KW-1185">Reference proteome</keyword>
<keyword id="KW-0687">Ribonucleoprotein</keyword>
<keyword id="KW-0689">Ribosomal protein</keyword>
<keyword id="KW-0694">RNA-binding</keyword>
<keyword id="KW-0699">rRNA-binding</keyword>
<sequence>MSMQDPIADMFTRIRNAQGANKVTVKMPSSKQKVAIAQVLKEEGFITGYSAESTVKPELEVELKYFEGKPVIETIERVSRPGLRIYKKRNELPNVMGGLGIAVVSTSKGLMTDRAARQAGLGGEIIGYVA</sequence>
<proteinExistence type="inferred from homology"/>
<protein>
    <recommendedName>
        <fullName evidence="1">Small ribosomal subunit protein uS8</fullName>
    </recommendedName>
    <alternativeName>
        <fullName evidence="2">30S ribosomal protein S8</fullName>
    </alternativeName>
</protein>
<feature type="chain" id="PRO_0000126421" description="Small ribosomal subunit protein uS8">
    <location>
        <begin position="1"/>
        <end position="130"/>
    </location>
</feature>
<accession>Q5QXV9</accession>
<name>RS8_IDILO</name>
<reference key="1">
    <citation type="journal article" date="2004" name="Proc. Natl. Acad. Sci. U.S.A.">
        <title>Genome sequence of the deep-sea gamma-proteobacterium Idiomarina loihiensis reveals amino acid fermentation as a source of carbon and energy.</title>
        <authorList>
            <person name="Hou S."/>
            <person name="Saw J.H."/>
            <person name="Lee K.S."/>
            <person name="Freitas T.A."/>
            <person name="Belisle C."/>
            <person name="Kawarabayasi Y."/>
            <person name="Donachie S.P."/>
            <person name="Pikina A."/>
            <person name="Galperin M.Y."/>
            <person name="Koonin E.V."/>
            <person name="Makarova K.S."/>
            <person name="Omelchenko M.V."/>
            <person name="Sorokin A."/>
            <person name="Wolf Y.I."/>
            <person name="Li Q.X."/>
            <person name="Keum Y.S."/>
            <person name="Campbell S."/>
            <person name="Denery J."/>
            <person name="Aizawa S."/>
            <person name="Shibata S."/>
            <person name="Malahoff A."/>
            <person name="Alam M."/>
        </authorList>
    </citation>
    <scope>NUCLEOTIDE SEQUENCE [LARGE SCALE GENOMIC DNA]</scope>
    <source>
        <strain>ATCC BAA-735 / DSM 15497 / L2-TR</strain>
    </source>
</reference>
<comment type="function">
    <text evidence="1">One of the primary rRNA binding proteins, it binds directly to 16S rRNA central domain where it helps coordinate assembly of the platform of the 30S subunit.</text>
</comment>
<comment type="subunit">
    <text evidence="1">Part of the 30S ribosomal subunit. Contacts proteins S5 and S12.</text>
</comment>
<comment type="similarity">
    <text evidence="1">Belongs to the universal ribosomal protein uS8 family.</text>
</comment>
<gene>
    <name evidence="1" type="primary">rpsH</name>
    <name type="ordered locus">IL1902</name>
</gene>
<dbReference type="EMBL" id="AE017340">
    <property type="protein sequence ID" value="AAV82734.1"/>
    <property type="molecule type" value="Genomic_DNA"/>
</dbReference>
<dbReference type="RefSeq" id="WP_011235133.1">
    <property type="nucleotide sequence ID" value="NC_006512.1"/>
</dbReference>
<dbReference type="SMR" id="Q5QXV9"/>
<dbReference type="STRING" id="283942.IL1902"/>
<dbReference type="GeneID" id="78252622"/>
<dbReference type="KEGG" id="ilo:IL1902"/>
<dbReference type="eggNOG" id="COG0096">
    <property type="taxonomic scope" value="Bacteria"/>
</dbReference>
<dbReference type="HOGENOM" id="CLU_098428_0_0_6"/>
<dbReference type="OrthoDB" id="9802617at2"/>
<dbReference type="Proteomes" id="UP000001171">
    <property type="component" value="Chromosome"/>
</dbReference>
<dbReference type="GO" id="GO:1990904">
    <property type="term" value="C:ribonucleoprotein complex"/>
    <property type="evidence" value="ECO:0007669"/>
    <property type="project" value="UniProtKB-KW"/>
</dbReference>
<dbReference type="GO" id="GO:0005840">
    <property type="term" value="C:ribosome"/>
    <property type="evidence" value="ECO:0007669"/>
    <property type="project" value="UniProtKB-KW"/>
</dbReference>
<dbReference type="GO" id="GO:0019843">
    <property type="term" value="F:rRNA binding"/>
    <property type="evidence" value="ECO:0007669"/>
    <property type="project" value="UniProtKB-UniRule"/>
</dbReference>
<dbReference type="GO" id="GO:0003735">
    <property type="term" value="F:structural constituent of ribosome"/>
    <property type="evidence" value="ECO:0007669"/>
    <property type="project" value="InterPro"/>
</dbReference>
<dbReference type="GO" id="GO:0006412">
    <property type="term" value="P:translation"/>
    <property type="evidence" value="ECO:0007669"/>
    <property type="project" value="UniProtKB-UniRule"/>
</dbReference>
<dbReference type="FunFam" id="3.30.1370.30:FF:000003">
    <property type="entry name" value="30S ribosomal protein S8"/>
    <property type="match status" value="1"/>
</dbReference>
<dbReference type="FunFam" id="3.30.1490.10:FF:000001">
    <property type="entry name" value="30S ribosomal protein S8"/>
    <property type="match status" value="1"/>
</dbReference>
<dbReference type="Gene3D" id="3.30.1370.30">
    <property type="match status" value="1"/>
</dbReference>
<dbReference type="Gene3D" id="3.30.1490.10">
    <property type="match status" value="1"/>
</dbReference>
<dbReference type="HAMAP" id="MF_01302_B">
    <property type="entry name" value="Ribosomal_uS8_B"/>
    <property type="match status" value="1"/>
</dbReference>
<dbReference type="InterPro" id="IPR000630">
    <property type="entry name" value="Ribosomal_uS8"/>
</dbReference>
<dbReference type="InterPro" id="IPR047863">
    <property type="entry name" value="Ribosomal_uS8_CS"/>
</dbReference>
<dbReference type="InterPro" id="IPR035987">
    <property type="entry name" value="Ribosomal_uS8_sf"/>
</dbReference>
<dbReference type="NCBIfam" id="NF001109">
    <property type="entry name" value="PRK00136.1"/>
    <property type="match status" value="1"/>
</dbReference>
<dbReference type="PANTHER" id="PTHR11758">
    <property type="entry name" value="40S RIBOSOMAL PROTEIN S15A"/>
    <property type="match status" value="1"/>
</dbReference>
<dbReference type="Pfam" id="PF00410">
    <property type="entry name" value="Ribosomal_S8"/>
    <property type="match status" value="1"/>
</dbReference>
<dbReference type="SUPFAM" id="SSF56047">
    <property type="entry name" value="Ribosomal protein S8"/>
    <property type="match status" value="1"/>
</dbReference>
<dbReference type="PROSITE" id="PS00053">
    <property type="entry name" value="RIBOSOMAL_S8"/>
    <property type="match status" value="1"/>
</dbReference>
<evidence type="ECO:0000255" key="1">
    <source>
        <dbReference type="HAMAP-Rule" id="MF_01302"/>
    </source>
</evidence>
<evidence type="ECO:0000305" key="2"/>